<accession>Q5U4U6</accession>
<protein>
    <recommendedName>
        <fullName evidence="1">Tryptophan 2,3-dioxygenase</fullName>
        <shortName evidence="1">TDO</shortName>
        <ecNumber evidence="1">1.13.11.11</ecNumber>
    </recommendedName>
    <alternativeName>
        <fullName evidence="1">Tryptamin 2,3-dioxygenase</fullName>
    </alternativeName>
    <alternativeName>
        <fullName evidence="1">Tryptophan oxygenase</fullName>
        <shortName evidence="1">TO</shortName>
        <shortName evidence="1">TRPO</shortName>
    </alternativeName>
    <alternativeName>
        <fullName evidence="1">Tryptophan pyrrolase</fullName>
    </alternativeName>
    <alternativeName>
        <fullName evidence="1">Tryptophanase</fullName>
    </alternativeName>
</protein>
<comment type="function">
    <text evidence="1">Heme-dependent dioxygenase that catalyzes the oxidative cleavage of the L-tryptophan (L-Trp) pyrrole ring and converts L-tryptophan to N-formyl-L-kynurenine. Catalyzes the oxidative cleavage of the indole moiety.</text>
</comment>
<comment type="catalytic activity">
    <reaction evidence="1">
        <text>L-tryptophan + O2 = N-formyl-L-kynurenine</text>
        <dbReference type="Rhea" id="RHEA:24536"/>
        <dbReference type="ChEBI" id="CHEBI:15379"/>
        <dbReference type="ChEBI" id="CHEBI:57912"/>
        <dbReference type="ChEBI" id="CHEBI:58629"/>
        <dbReference type="EC" id="1.13.11.11"/>
    </reaction>
</comment>
<comment type="cofactor">
    <cofactor evidence="1">
        <name>heme</name>
        <dbReference type="ChEBI" id="CHEBI:30413"/>
    </cofactor>
    <text evidence="1">Binds 1 heme group per subunit.</text>
</comment>
<comment type="pathway">
    <text evidence="1">Amino-acid degradation; L-tryptophan degradation via kynurenine pathway; L-kynurenine from L-tryptophan: step 1/2.</text>
</comment>
<comment type="subunit">
    <text evidence="1">Homotetramer. Dimer of dimers.</text>
</comment>
<comment type="similarity">
    <text evidence="1">Belongs to the tryptophan 2,3-dioxygenase family.</text>
</comment>
<keyword id="KW-0223">Dioxygenase</keyword>
<keyword id="KW-0349">Heme</keyword>
<keyword id="KW-0408">Iron</keyword>
<keyword id="KW-0479">Metal-binding</keyword>
<keyword id="KW-0560">Oxidoreductase</keyword>
<keyword id="KW-1185">Reference proteome</keyword>
<keyword id="KW-0823">Tryptophan catabolism</keyword>
<name>T23O_XENLA</name>
<gene>
    <name evidence="1" type="primary">tdo2</name>
</gene>
<organism>
    <name type="scientific">Xenopus laevis</name>
    <name type="common">African clawed frog</name>
    <dbReference type="NCBI Taxonomy" id="8355"/>
    <lineage>
        <taxon>Eukaryota</taxon>
        <taxon>Metazoa</taxon>
        <taxon>Chordata</taxon>
        <taxon>Craniata</taxon>
        <taxon>Vertebrata</taxon>
        <taxon>Euteleostomi</taxon>
        <taxon>Amphibia</taxon>
        <taxon>Batrachia</taxon>
        <taxon>Anura</taxon>
        <taxon>Pipoidea</taxon>
        <taxon>Pipidae</taxon>
        <taxon>Xenopodinae</taxon>
        <taxon>Xenopus</taxon>
        <taxon>Xenopus</taxon>
    </lineage>
</organism>
<dbReference type="EC" id="1.13.11.11" evidence="1"/>
<dbReference type="EMBL" id="BC084948">
    <property type="protein sequence ID" value="AAH84948.1"/>
    <property type="molecule type" value="mRNA"/>
</dbReference>
<dbReference type="RefSeq" id="NP_001088604.1">
    <property type="nucleotide sequence ID" value="NM_001095135.1"/>
</dbReference>
<dbReference type="SMR" id="Q5U4U6"/>
<dbReference type="DNASU" id="495495"/>
<dbReference type="GeneID" id="495495"/>
<dbReference type="KEGG" id="xla:495495"/>
<dbReference type="AGR" id="Xenbase:XB-GENE-976717"/>
<dbReference type="CTD" id="495495"/>
<dbReference type="Xenbase" id="XB-GENE-976717">
    <property type="gene designation" value="tdo2.L"/>
</dbReference>
<dbReference type="OMA" id="FITIHQT"/>
<dbReference type="OrthoDB" id="447477at2759"/>
<dbReference type="UniPathway" id="UPA00333">
    <property type="reaction ID" value="UER00453"/>
</dbReference>
<dbReference type="Proteomes" id="UP000186698">
    <property type="component" value="Chromosome 1L"/>
</dbReference>
<dbReference type="Bgee" id="495495">
    <property type="expression patterns" value="Expressed in liver and 1 other cell type or tissue"/>
</dbReference>
<dbReference type="GO" id="GO:0020037">
    <property type="term" value="F:heme binding"/>
    <property type="evidence" value="ECO:0000318"/>
    <property type="project" value="GO_Central"/>
</dbReference>
<dbReference type="GO" id="GO:0046872">
    <property type="term" value="F:metal ion binding"/>
    <property type="evidence" value="ECO:0007669"/>
    <property type="project" value="UniProtKB-KW"/>
</dbReference>
<dbReference type="GO" id="GO:0004833">
    <property type="term" value="F:tryptophan 2,3-dioxygenase activity"/>
    <property type="evidence" value="ECO:0000250"/>
    <property type="project" value="UniProtKB"/>
</dbReference>
<dbReference type="GO" id="GO:0019442">
    <property type="term" value="P:L-tryptophan catabolic process to acetyl-CoA"/>
    <property type="evidence" value="ECO:0000318"/>
    <property type="project" value="GO_Central"/>
</dbReference>
<dbReference type="GO" id="GO:0019441">
    <property type="term" value="P:L-tryptophan catabolic process to kynurenine"/>
    <property type="evidence" value="ECO:0000250"/>
    <property type="project" value="UniProtKB"/>
</dbReference>
<dbReference type="GO" id="GO:0051289">
    <property type="term" value="P:protein homotetramerization"/>
    <property type="evidence" value="ECO:0000250"/>
    <property type="project" value="UniProtKB"/>
</dbReference>
<dbReference type="FunFam" id="1.10.287.3810:FF:000001">
    <property type="entry name" value="Tryptophan 2,3-dioxygenase"/>
    <property type="match status" value="1"/>
</dbReference>
<dbReference type="Gene3D" id="1.10.287.3810">
    <property type="match status" value="1"/>
</dbReference>
<dbReference type="Gene3D" id="1.20.58.480">
    <property type="match status" value="1"/>
</dbReference>
<dbReference type="HAMAP" id="MF_01972">
    <property type="entry name" value="T23O"/>
    <property type="match status" value="1"/>
</dbReference>
<dbReference type="InterPro" id="IPR037217">
    <property type="entry name" value="Trp/Indoleamine_2_3_dOase-like"/>
</dbReference>
<dbReference type="InterPro" id="IPR004981">
    <property type="entry name" value="Trp_2_3_dOase"/>
</dbReference>
<dbReference type="PANTHER" id="PTHR10138">
    <property type="entry name" value="TRYPTOPHAN 2,3-DIOXYGENASE"/>
    <property type="match status" value="1"/>
</dbReference>
<dbReference type="PANTHER" id="PTHR10138:SF0">
    <property type="entry name" value="TRYPTOPHAN 2,3-DIOXYGENASE"/>
    <property type="match status" value="1"/>
</dbReference>
<dbReference type="Pfam" id="PF03301">
    <property type="entry name" value="Trp_dioxygenase"/>
    <property type="match status" value="1"/>
</dbReference>
<dbReference type="SUPFAM" id="SSF140959">
    <property type="entry name" value="Indolic compounds 2,3-dioxygenase-like"/>
    <property type="match status" value="1"/>
</dbReference>
<reference key="1">
    <citation type="submission" date="2004-10" db="EMBL/GenBank/DDBJ databases">
        <authorList>
            <consortium name="NIH - Xenopus Gene Collection (XGC) project"/>
        </authorList>
    </citation>
    <scope>NUCLEOTIDE SEQUENCE [LARGE SCALE MRNA]</scope>
    <source>
        <tissue>Liver</tissue>
    </source>
</reference>
<proteinExistence type="evidence at transcript level"/>
<feature type="chain" id="PRO_0000247476" description="Tryptophan 2,3-dioxygenase">
    <location>
        <begin position="1"/>
        <end position="406"/>
    </location>
</feature>
<feature type="binding site" evidence="1">
    <location>
        <begin position="72"/>
        <end position="76"/>
    </location>
    <ligand>
        <name>substrate</name>
    </ligand>
</feature>
<feature type="binding site" evidence="1">
    <location>
        <position position="144"/>
    </location>
    <ligand>
        <name>substrate</name>
    </ligand>
</feature>
<feature type="binding site" description="axial binding residue" evidence="1">
    <location>
        <position position="328"/>
    </location>
    <ligand>
        <name>heme</name>
        <dbReference type="ChEBI" id="CHEBI:30413"/>
    </ligand>
    <ligandPart>
        <name>Fe</name>
        <dbReference type="ChEBI" id="CHEBI:18248"/>
    </ligandPart>
</feature>
<feature type="binding site" evidence="1">
    <location>
        <position position="342"/>
    </location>
    <ligand>
        <name>substrate</name>
    </ligand>
</feature>
<sequence>MSGCPFMAKKHHFTFSELSLEDKHEDNSQEGLNKASKGGLIYGDYLQLDKVLNAQELQSEKKGNKIHDEHLFIVTHQAYELWFKQILWELDSVREIFQNGHVRDERNMLKVVARIHRISMILKLLVEQFSVLETMTAMDFFDFRDYLSPASGFQSLQFRLLENKIGVPEILRVPYNRRHYRDNFKGETNELLLRSEQEPTLLGLVEAWLERTPGLEEEGFHFWGKLEVNIFRALEEELQAAKTKPDSEDKEEHLAELQKQKELFGALFDERRHEHLLSKGERRLSYKALKGALMINFYREEPRFQVPFQLLTSLMEIDTLMTKWRYNHVCMVHRMIGSKAGTGGSSGYQYLRSTVSDRYKVFVDLFNLSTYLVPRHWVPRLNPSIHKFLYTAECCDSSYFSSDDSD</sequence>
<evidence type="ECO:0000255" key="1">
    <source>
        <dbReference type="HAMAP-Rule" id="MF_03020"/>
    </source>
</evidence>